<name>NDKB_MERPR</name>
<feature type="chain" id="PRO_0000306193" description="Nucleoside diphosphate kinase B">
    <location>
        <begin position="1"/>
        <end position="128"/>
    </location>
</feature>
<feature type="active site" description="Pros-phosphohistidine intermediate" evidence="1 4">
    <location>
        <position position="94"/>
    </location>
</feature>
<feature type="binding site" evidence="1">
    <location>
        <position position="9"/>
    </location>
    <ligand>
        <name>ATP</name>
        <dbReference type="ChEBI" id="CHEBI:30616"/>
    </ligand>
</feature>
<feature type="binding site" evidence="1">
    <location>
        <position position="39"/>
    </location>
    <ligand>
        <name>ATP</name>
        <dbReference type="ChEBI" id="CHEBI:30616"/>
    </ligand>
</feature>
<feature type="binding site" evidence="1">
    <location>
        <position position="70"/>
    </location>
    <ligand>
        <name>ATP</name>
        <dbReference type="ChEBI" id="CHEBI:30616"/>
    </ligand>
</feature>
<feature type="binding site" evidence="1">
    <location>
        <position position="81"/>
    </location>
    <ligand>
        <name>ATP</name>
        <dbReference type="ChEBI" id="CHEBI:30616"/>
    </ligand>
</feature>
<feature type="binding site" evidence="1">
    <location>
        <position position="91"/>
    </location>
    <ligand>
        <name>ATP</name>
        <dbReference type="ChEBI" id="CHEBI:30616"/>
    </ligand>
</feature>
<feature type="modified residue" description="N-acetylmethionine" evidence="5">
    <location>
        <position position="1"/>
    </location>
</feature>
<feature type="non-consecutive residues" evidence="6">
    <location>
        <begin position="23"/>
        <end position="24"/>
    </location>
</feature>
<feature type="non-consecutive residues" evidence="6">
    <location>
        <begin position="27"/>
        <end position="28"/>
    </location>
</feature>
<feature type="non-consecutive residues" evidence="6">
    <location>
        <begin position="29"/>
        <end position="30"/>
    </location>
</feature>
<feature type="non-consecutive residues" evidence="6">
    <location>
        <begin position="64"/>
        <end position="65"/>
    </location>
</feature>
<accession>P85289</accession>
<sequence>MEQTFVAIKPDGVQRGLCGEVMKFIQPMKHYLDLKDMPFYAGLCKYMSSGPVFAMVWEGEGIVKMMLGETNPADSKPGSIRGDFCINIGRNIIHGSDTVENAKMEVGLWFKPEEFVAYAEKAKAWVYE</sequence>
<organism>
    <name type="scientific">Merluccius productus</name>
    <name type="common">North Pacific hake</name>
    <name type="synonym">Merlangus productus</name>
    <dbReference type="NCBI Taxonomy" id="89952"/>
    <lineage>
        <taxon>Eukaryota</taxon>
        <taxon>Metazoa</taxon>
        <taxon>Chordata</taxon>
        <taxon>Craniata</taxon>
        <taxon>Vertebrata</taxon>
        <taxon>Euteleostomi</taxon>
        <taxon>Actinopterygii</taxon>
        <taxon>Neopterygii</taxon>
        <taxon>Teleostei</taxon>
        <taxon>Neoteleostei</taxon>
        <taxon>Acanthomorphata</taxon>
        <taxon>Zeiogadaria</taxon>
        <taxon>Gadariae</taxon>
        <taxon>Gadiformes</taxon>
        <taxon>Gadoidei</taxon>
        <taxon>Merlucciidae</taxon>
        <taxon>Merluccius</taxon>
    </lineage>
</organism>
<reference evidence="7" key="1">
    <citation type="journal article" date="2007" name="J. Proteome Res.">
        <title>De novo mass spectrometry sequencing and characterization of species-specific peptides from nucleoside diphosphate kinase B for the classification of commercial fish species belonging to the family Merlucciidae.</title>
        <authorList>
            <person name="Carrera M."/>
            <person name="Canas B."/>
            <person name="Pineiro C."/>
            <person name="Vazquez J."/>
            <person name="Gallardo J.M."/>
        </authorList>
    </citation>
    <scope>PROTEIN SEQUENCE</scope>
    <scope>ACETYLATION AT MET-1</scope>
    <source>
        <tissue evidence="5">White muscle</tissue>
    </source>
</reference>
<evidence type="ECO:0000250" key="1">
    <source>
        <dbReference type="UniProtKB" id="P15531"/>
    </source>
</evidence>
<evidence type="ECO:0000250" key="2">
    <source>
        <dbReference type="UniProtKB" id="P22392"/>
    </source>
</evidence>
<evidence type="ECO:0000255" key="3"/>
<evidence type="ECO:0000255" key="4">
    <source>
        <dbReference type="PROSITE-ProRule" id="PRU10030"/>
    </source>
</evidence>
<evidence type="ECO:0000269" key="5">
    <source>
    </source>
</evidence>
<evidence type="ECO:0000303" key="6">
    <source>
    </source>
</evidence>
<evidence type="ECO:0000305" key="7"/>
<keyword id="KW-0007">Acetylation</keyword>
<keyword id="KW-0067">ATP-binding</keyword>
<keyword id="KW-0131">Cell cycle</keyword>
<keyword id="KW-0966">Cell projection</keyword>
<keyword id="KW-0963">Cytoplasm</keyword>
<keyword id="KW-0903">Direct protein sequencing</keyword>
<keyword id="KW-0418">Kinase</keyword>
<keyword id="KW-0460">Magnesium</keyword>
<keyword id="KW-0479">Metal-binding</keyword>
<keyword id="KW-0546">Nucleotide metabolism</keyword>
<keyword id="KW-0547">Nucleotide-binding</keyword>
<keyword id="KW-0539">Nucleus</keyword>
<keyword id="KW-0597">Phosphoprotein</keyword>
<keyword id="KW-0808">Transferase</keyword>
<comment type="function">
    <text evidence="1">Major role in the synthesis of nucleoside triphosphates other than ATP.</text>
</comment>
<comment type="catalytic activity">
    <reaction evidence="1 4">
        <text>a 2'-deoxyribonucleoside 5'-diphosphate + ATP = a 2'-deoxyribonucleoside 5'-triphosphate + ADP</text>
        <dbReference type="Rhea" id="RHEA:44640"/>
        <dbReference type="ChEBI" id="CHEBI:30616"/>
        <dbReference type="ChEBI" id="CHEBI:61560"/>
        <dbReference type="ChEBI" id="CHEBI:73316"/>
        <dbReference type="ChEBI" id="CHEBI:456216"/>
        <dbReference type="EC" id="2.7.4.6"/>
    </reaction>
</comment>
<comment type="catalytic activity">
    <reaction evidence="1 4">
        <text>a ribonucleoside 5'-diphosphate + ATP = a ribonucleoside 5'-triphosphate + ADP</text>
        <dbReference type="Rhea" id="RHEA:18113"/>
        <dbReference type="ChEBI" id="CHEBI:30616"/>
        <dbReference type="ChEBI" id="CHEBI:57930"/>
        <dbReference type="ChEBI" id="CHEBI:61557"/>
        <dbReference type="ChEBI" id="CHEBI:456216"/>
        <dbReference type="EC" id="2.7.4.6"/>
    </reaction>
</comment>
<comment type="cofactor">
    <cofactor evidence="1">
        <name>Mg(2+)</name>
        <dbReference type="ChEBI" id="CHEBI:18420"/>
    </cofactor>
</comment>
<comment type="subcellular location">
    <subcellularLocation>
        <location evidence="2">Cytoplasm</location>
    </subcellularLocation>
    <subcellularLocation>
        <location evidence="2">Nucleus</location>
    </subcellularLocation>
    <subcellularLocation>
        <location evidence="2">Cell projection</location>
        <location evidence="2">Lamellipodium</location>
    </subcellularLocation>
    <subcellularLocation>
        <location evidence="2">Cell projection</location>
        <location evidence="2">Ruffle</location>
    </subcellularLocation>
</comment>
<comment type="similarity">
    <text evidence="3">Belongs to the NDK family.</text>
</comment>
<gene>
    <name type="primary">nme2</name>
</gene>
<dbReference type="EC" id="2.7.4.6"/>
<dbReference type="SMR" id="P85289"/>
<dbReference type="iPTMnet" id="P85289"/>
<dbReference type="BRENDA" id="2.7.4.6">
    <property type="organism ID" value="3235"/>
</dbReference>
<dbReference type="GO" id="GO:0005737">
    <property type="term" value="C:cytoplasm"/>
    <property type="evidence" value="ECO:0007669"/>
    <property type="project" value="UniProtKB-SubCell"/>
</dbReference>
<dbReference type="GO" id="GO:0030027">
    <property type="term" value="C:lamellipodium"/>
    <property type="evidence" value="ECO:0007669"/>
    <property type="project" value="UniProtKB-SubCell"/>
</dbReference>
<dbReference type="GO" id="GO:0005634">
    <property type="term" value="C:nucleus"/>
    <property type="evidence" value="ECO:0007669"/>
    <property type="project" value="UniProtKB-SubCell"/>
</dbReference>
<dbReference type="GO" id="GO:0001726">
    <property type="term" value="C:ruffle"/>
    <property type="evidence" value="ECO:0007669"/>
    <property type="project" value="UniProtKB-SubCell"/>
</dbReference>
<dbReference type="GO" id="GO:0005524">
    <property type="term" value="F:ATP binding"/>
    <property type="evidence" value="ECO:0007669"/>
    <property type="project" value="UniProtKB-KW"/>
</dbReference>
<dbReference type="GO" id="GO:0046872">
    <property type="term" value="F:metal ion binding"/>
    <property type="evidence" value="ECO:0007669"/>
    <property type="project" value="UniProtKB-KW"/>
</dbReference>
<dbReference type="GO" id="GO:0004550">
    <property type="term" value="F:nucleoside diphosphate kinase activity"/>
    <property type="evidence" value="ECO:0007669"/>
    <property type="project" value="UniProtKB-EC"/>
</dbReference>
<dbReference type="GO" id="GO:0009117">
    <property type="term" value="P:nucleotide metabolic process"/>
    <property type="evidence" value="ECO:0007669"/>
    <property type="project" value="UniProtKB-KW"/>
</dbReference>
<dbReference type="CDD" id="cd04413">
    <property type="entry name" value="NDPk_I"/>
    <property type="match status" value="1"/>
</dbReference>
<dbReference type="FunFam" id="3.30.70.141:FF:000039">
    <property type="entry name" value="Nucleoside diphosphate kinase B"/>
    <property type="match status" value="1"/>
</dbReference>
<dbReference type="Gene3D" id="3.30.70.141">
    <property type="entry name" value="Nucleoside diphosphate kinase-like domain"/>
    <property type="match status" value="1"/>
</dbReference>
<dbReference type="InterPro" id="IPR034907">
    <property type="entry name" value="NDK-like_dom"/>
</dbReference>
<dbReference type="InterPro" id="IPR036850">
    <property type="entry name" value="NDK-like_dom_sf"/>
</dbReference>
<dbReference type="PANTHER" id="PTHR11349">
    <property type="entry name" value="NUCLEOSIDE DIPHOSPHATE KINASE"/>
    <property type="match status" value="1"/>
</dbReference>
<dbReference type="Pfam" id="PF00334">
    <property type="entry name" value="NDK"/>
    <property type="match status" value="1"/>
</dbReference>
<dbReference type="SMART" id="SM00562">
    <property type="entry name" value="NDK"/>
    <property type="match status" value="1"/>
</dbReference>
<dbReference type="SUPFAM" id="SSF54919">
    <property type="entry name" value="Nucleoside diphosphate kinase, NDK"/>
    <property type="match status" value="1"/>
</dbReference>
<dbReference type="PROSITE" id="PS51374">
    <property type="entry name" value="NDPK_LIKE"/>
    <property type="match status" value="1"/>
</dbReference>
<protein>
    <recommendedName>
        <fullName>Nucleoside diphosphate kinase B</fullName>
        <shortName>NDK B</shortName>
        <shortName>NDP kinase B</shortName>
        <ecNumber>2.7.4.6</ecNumber>
    </recommendedName>
</protein>
<proteinExistence type="evidence at protein level"/>